<dbReference type="EC" id="5.3.1.14" evidence="1"/>
<dbReference type="EMBL" id="CP001048">
    <property type="protein sequence ID" value="ACC87396.1"/>
    <property type="molecule type" value="Genomic_DNA"/>
</dbReference>
<dbReference type="RefSeq" id="WP_012413441.1">
    <property type="nucleotide sequence ID" value="NZ_CP009780.1"/>
</dbReference>
<dbReference type="SMR" id="B2K1W1"/>
<dbReference type="KEGG" id="ypb:YPTS_0407"/>
<dbReference type="PATRIC" id="fig|502801.10.peg.4085"/>
<dbReference type="UniPathway" id="UPA00541">
    <property type="reaction ID" value="UER00601"/>
</dbReference>
<dbReference type="GO" id="GO:0005737">
    <property type="term" value="C:cytoplasm"/>
    <property type="evidence" value="ECO:0007669"/>
    <property type="project" value="UniProtKB-SubCell"/>
</dbReference>
<dbReference type="GO" id="GO:0008740">
    <property type="term" value="F:L-rhamnose isomerase activity"/>
    <property type="evidence" value="ECO:0007669"/>
    <property type="project" value="UniProtKB-UniRule"/>
</dbReference>
<dbReference type="GO" id="GO:0030145">
    <property type="term" value="F:manganese ion binding"/>
    <property type="evidence" value="ECO:0007669"/>
    <property type="project" value="UniProtKB-UniRule"/>
</dbReference>
<dbReference type="GO" id="GO:0019324">
    <property type="term" value="P:L-lyxose metabolic process"/>
    <property type="evidence" value="ECO:0007669"/>
    <property type="project" value="TreeGrafter"/>
</dbReference>
<dbReference type="GO" id="GO:0019301">
    <property type="term" value="P:rhamnose catabolic process"/>
    <property type="evidence" value="ECO:0007669"/>
    <property type="project" value="UniProtKB-UniRule"/>
</dbReference>
<dbReference type="FunFam" id="3.20.20.150:FF:000006">
    <property type="entry name" value="L-rhamnose isomerase"/>
    <property type="match status" value="1"/>
</dbReference>
<dbReference type="Gene3D" id="3.20.20.150">
    <property type="entry name" value="Divalent-metal-dependent TIM barrel enzymes"/>
    <property type="match status" value="1"/>
</dbReference>
<dbReference type="HAMAP" id="MF_00541">
    <property type="entry name" value="RhaA"/>
    <property type="match status" value="1"/>
</dbReference>
<dbReference type="InterPro" id="IPR050337">
    <property type="entry name" value="L-rhamnose_isomerase"/>
</dbReference>
<dbReference type="InterPro" id="IPR009308">
    <property type="entry name" value="Rhamnose_isomerase"/>
</dbReference>
<dbReference type="InterPro" id="IPR036237">
    <property type="entry name" value="Xyl_isomerase-like_sf"/>
</dbReference>
<dbReference type="NCBIfam" id="NF002203">
    <property type="entry name" value="PRK01076.1"/>
    <property type="match status" value="1"/>
</dbReference>
<dbReference type="NCBIfam" id="TIGR01748">
    <property type="entry name" value="rhaA"/>
    <property type="match status" value="1"/>
</dbReference>
<dbReference type="PANTHER" id="PTHR30268">
    <property type="entry name" value="L-RHAMNOSE ISOMERASE"/>
    <property type="match status" value="1"/>
</dbReference>
<dbReference type="PANTHER" id="PTHR30268:SF0">
    <property type="entry name" value="L-RHAMNOSE ISOMERASE"/>
    <property type="match status" value="1"/>
</dbReference>
<dbReference type="Pfam" id="PF06134">
    <property type="entry name" value="RhaA"/>
    <property type="match status" value="1"/>
</dbReference>
<dbReference type="SUPFAM" id="SSF51658">
    <property type="entry name" value="Xylose isomerase-like"/>
    <property type="match status" value="1"/>
</dbReference>
<accession>B2K1W1</accession>
<sequence>MTNSIEQAWDLAKQRFAAVGVDVDAALTRLDTLPVSMHCWQGDDVTGFEDPDGVLTGGIQATGNYPGKARNATELRSDLELALALIPGPKRLNLHAIYLESDTSVARNKIEPRHFSHWVAWAKKHQLGLDFNPSCFSHPLSADGFTLSHADPEIRQFWIEHCQASRRISAYFGEQLGTPSVMNIWIPDGMKDTPIDRLAPRQRLLSALDEVISEKLNPAHHIDAVESKLFGIGAESYTVGSNEFYMGYAASRQTALCLDAGHFHPTEVISDKISSAMLYVPRLLLHVSRPVRWDSDHVVLLDDETQAIASEIIRHNLFDRVHIGLDFFDASINRIAAWVIGTRNMKKALLRALLEPTDMLRQLELRGDYTARLALLEEQKSLPWQAIWEGYCQRNDVPVDARWLDAVREYEQQILSQR</sequence>
<reference key="1">
    <citation type="submission" date="2008-04" db="EMBL/GenBank/DDBJ databases">
        <title>Complete sequence of Yersinia pseudotuberculosis PB1/+.</title>
        <authorList>
            <person name="Copeland A."/>
            <person name="Lucas S."/>
            <person name="Lapidus A."/>
            <person name="Glavina del Rio T."/>
            <person name="Dalin E."/>
            <person name="Tice H."/>
            <person name="Bruce D."/>
            <person name="Goodwin L."/>
            <person name="Pitluck S."/>
            <person name="Munk A.C."/>
            <person name="Brettin T."/>
            <person name="Detter J.C."/>
            <person name="Han C."/>
            <person name="Tapia R."/>
            <person name="Schmutz J."/>
            <person name="Larimer F."/>
            <person name="Land M."/>
            <person name="Hauser L."/>
            <person name="Challacombe J.F."/>
            <person name="Green L."/>
            <person name="Lindler L.E."/>
            <person name="Nikolich M.P."/>
            <person name="Richardson P."/>
        </authorList>
    </citation>
    <scope>NUCLEOTIDE SEQUENCE [LARGE SCALE GENOMIC DNA]</scope>
    <source>
        <strain>PB1/+</strain>
    </source>
</reference>
<gene>
    <name evidence="1" type="primary">rhaA</name>
    <name type="ordered locus">YPTS_0407</name>
</gene>
<name>RHAA_YERPB</name>
<evidence type="ECO:0000255" key="1">
    <source>
        <dbReference type="HAMAP-Rule" id="MF_00541"/>
    </source>
</evidence>
<keyword id="KW-0963">Cytoplasm</keyword>
<keyword id="KW-0413">Isomerase</keyword>
<keyword id="KW-0464">Manganese</keyword>
<keyword id="KW-0479">Metal-binding</keyword>
<keyword id="KW-0684">Rhamnose metabolism</keyword>
<comment type="function">
    <text evidence="1">Catalyzes the interconversion of L-rhamnose and L-rhamnulose.</text>
</comment>
<comment type="catalytic activity">
    <reaction evidence="1">
        <text>L-rhamnopyranose = L-rhamnulose</text>
        <dbReference type="Rhea" id="RHEA:23160"/>
        <dbReference type="ChEBI" id="CHEBI:17897"/>
        <dbReference type="ChEBI" id="CHEBI:62346"/>
        <dbReference type="EC" id="5.3.1.14"/>
    </reaction>
</comment>
<comment type="cofactor">
    <cofactor evidence="1">
        <name>Mn(2+)</name>
        <dbReference type="ChEBI" id="CHEBI:29035"/>
    </cofactor>
    <text evidence="1">Binds 1 Mn(2+) ion per subunit.</text>
</comment>
<comment type="pathway">
    <text evidence="1">Carbohydrate degradation; L-rhamnose degradation; glycerone phosphate from L-rhamnose: step 1/3.</text>
</comment>
<comment type="subunit">
    <text evidence="1">Homotetramer.</text>
</comment>
<comment type="subcellular location">
    <subcellularLocation>
        <location evidence="1">Cytoplasm</location>
    </subcellularLocation>
</comment>
<comment type="similarity">
    <text evidence="1">Belongs to the rhamnose isomerase family.</text>
</comment>
<proteinExistence type="inferred from homology"/>
<feature type="chain" id="PRO_1000128894" description="L-rhamnose isomerase">
    <location>
        <begin position="1"/>
        <end position="418"/>
    </location>
</feature>
<feature type="binding site" evidence="1">
    <location>
        <position position="262"/>
    </location>
    <ligand>
        <name>Mn(2+)</name>
        <dbReference type="ChEBI" id="CHEBI:29035"/>
    </ligand>
</feature>
<feature type="binding site" evidence="1">
    <location>
        <position position="294"/>
    </location>
    <ligand>
        <name>Mn(2+)</name>
        <dbReference type="ChEBI" id="CHEBI:29035"/>
    </ligand>
</feature>
<feature type="binding site" evidence="1">
    <location>
        <position position="296"/>
    </location>
    <ligand>
        <name>Mn(2+)</name>
        <dbReference type="ChEBI" id="CHEBI:29035"/>
    </ligand>
</feature>
<protein>
    <recommendedName>
        <fullName evidence="1">L-rhamnose isomerase</fullName>
        <ecNumber evidence="1">5.3.1.14</ecNumber>
    </recommendedName>
</protein>
<organism>
    <name type="scientific">Yersinia pseudotuberculosis serotype IB (strain PB1/+)</name>
    <dbReference type="NCBI Taxonomy" id="502801"/>
    <lineage>
        <taxon>Bacteria</taxon>
        <taxon>Pseudomonadati</taxon>
        <taxon>Pseudomonadota</taxon>
        <taxon>Gammaproteobacteria</taxon>
        <taxon>Enterobacterales</taxon>
        <taxon>Yersiniaceae</taxon>
        <taxon>Yersinia</taxon>
    </lineage>
</organism>